<reference key="1">
    <citation type="journal article" date="1998" name="DNA Res.">
        <title>Structural analysis of Arabidopsis thaliana chromosome 5. V. Sequence features of the regions of 1,381,565 bp covered by twenty one physically assigned P1 and TAC clones.</title>
        <authorList>
            <person name="Kaneko T."/>
            <person name="Kotani H."/>
            <person name="Nakamura Y."/>
            <person name="Sato S."/>
            <person name="Asamizu E."/>
            <person name="Miyajima N."/>
            <person name="Tabata S."/>
        </authorList>
    </citation>
    <scope>NUCLEOTIDE SEQUENCE [LARGE SCALE GENOMIC DNA]</scope>
    <source>
        <strain>cv. Columbia</strain>
    </source>
</reference>
<reference key="2">
    <citation type="journal article" date="2017" name="Plant J.">
        <title>Araport11: a complete reannotation of the Arabidopsis thaliana reference genome.</title>
        <authorList>
            <person name="Cheng C.Y."/>
            <person name="Krishnakumar V."/>
            <person name="Chan A.P."/>
            <person name="Thibaud-Nissen F."/>
            <person name="Schobel S."/>
            <person name="Town C.D."/>
        </authorList>
    </citation>
    <scope>GENOME REANNOTATION</scope>
    <source>
        <strain>cv. Columbia</strain>
    </source>
</reference>
<reference key="3">
    <citation type="journal article" date="2001" name="BMC Genomics">
        <title>Kinesins in the Arabidopsis genome: a comparative analysis among eukaryotes.</title>
        <authorList>
            <person name="Reddy A.S."/>
            <person name="Day I.S."/>
        </authorList>
    </citation>
    <scope>GENE FAMILY</scope>
</reference>
<reference key="4">
    <citation type="journal article" date="2004" name="Plant Physiol.">
        <title>A plant-specific subclass of C-terminal kinesins contains a conserved a-type cyclin-dependent kinase site implicated in folding and dimerization.</title>
        <authorList>
            <person name="Vanstraelen M."/>
            <person name="Torres Acosta J.A."/>
            <person name="De Veylder L."/>
            <person name="Inze D."/>
            <person name="Geelen D."/>
        </authorList>
    </citation>
    <scope>SUBUNIT</scope>
    <scope>INTERACTION WITH CDKA-1</scope>
    <scope>TISSUE SPECIFICITY</scope>
</reference>
<reference key="5">
    <citation type="journal article" date="2006" name="BMC Genomics">
        <title>Comprehensive comparative analysis of kinesins in photosynthetic eukaryotes.</title>
        <authorList>
            <person name="Richardson D.N."/>
            <person name="Simmons M.P."/>
            <person name="Reddy A.S."/>
        </authorList>
    </citation>
    <scope>GENE FAMILY</scope>
    <scope>NOMENCLATURE</scope>
</reference>
<reference key="6">
    <citation type="journal article" date="2009" name="Plant Physiol.">
        <title>Large-scale Arabidopsis phosphoproteome profiling reveals novel chloroplast kinase substrates and phosphorylation networks.</title>
        <authorList>
            <person name="Reiland S."/>
            <person name="Messerli G."/>
            <person name="Baerenfaller K."/>
            <person name="Gerrits B."/>
            <person name="Endler A."/>
            <person name="Grossmann J."/>
            <person name="Gruissem W."/>
            <person name="Baginsky S."/>
        </authorList>
    </citation>
    <scope>IDENTIFICATION BY MASS SPECTROMETRY [LARGE SCALE ANALYSIS]</scope>
</reference>
<reference key="7">
    <citation type="journal article" date="2010" name="Mol. Syst. Biol.">
        <title>Targeted interactomics reveals a complex core cell cycle machinery in Arabidopsis thaliana.</title>
        <authorList>
            <person name="Van Leene J."/>
            <person name="Hollunder J."/>
            <person name="Eeckhout D."/>
            <person name="Persiau G."/>
            <person name="Van De Slijke E."/>
            <person name="Stals H."/>
            <person name="Van Isterdael G."/>
            <person name="Verkest A."/>
            <person name="Neirynck S."/>
            <person name="Buffel Y."/>
            <person name="De Bodt S."/>
            <person name="Maere S."/>
            <person name="Laukens K."/>
            <person name="Pharazyn A."/>
            <person name="Ferreira P.C.G."/>
            <person name="Eloy N."/>
            <person name="Renne C."/>
            <person name="Meyer C."/>
            <person name="Faure J.-D."/>
            <person name="Steinbrenner J."/>
            <person name="Beynon J."/>
            <person name="Larkin J.C."/>
            <person name="Van de Peer Y."/>
            <person name="Hilson P."/>
            <person name="Kuiper M."/>
            <person name="De Veylder L."/>
            <person name="Van Onckelen H."/>
            <person name="Inze D."/>
            <person name="Witters E."/>
            <person name="De Jaeger G."/>
        </authorList>
    </citation>
    <scope>INTERACTION WITH AT4G14310</scope>
</reference>
<reference key="8">
    <citation type="journal article" date="2010" name="Proc. Natl. Acad. Sci. U.S.A.">
        <title>Two kinesin-like proteins mediate actin-based chloroplast movement in Arabidopsis thaliana.</title>
        <authorList>
            <person name="Suetsugu N."/>
            <person name="Yamada N."/>
            <person name="Kagawa T."/>
            <person name="Yonekura H."/>
            <person name="Uyeda T.Q."/>
            <person name="Kadota A."/>
            <person name="Wada M."/>
        </authorList>
    </citation>
    <scope>FUNCTION</scope>
    <scope>SUBCELLULAR LOCATION</scope>
    <scope>DISRUPTION PHENOTYPE</scope>
</reference>
<reference key="9">
    <citation type="journal article" date="2012" name="Protoplasma">
        <title>Functions of the Arabidopsis kinesin superfamily of microtubule-based motor proteins.</title>
        <authorList>
            <person name="Zhu C."/>
            <person name="Dixit R."/>
        </authorList>
    </citation>
    <scope>REVIEW</scope>
</reference>
<reference key="10">
    <citation type="journal article" date="2016" name="PLoS ONE">
        <title>Light-induced movements of chloroplasts and nuclei are regulated in both cp-actin-filament-dependent and -independent manners in Arabidopsis thaliana.</title>
        <authorList>
            <person name="Suetsugu N."/>
            <person name="Higa T."/>
            <person name="Gotoh E."/>
            <person name="Wada M."/>
        </authorList>
    </citation>
    <scope>FUNCTION</scope>
    <scope>DISRUPTION PHENOTYPE</scope>
</reference>
<keyword id="KW-0067">ATP-binding</keyword>
<keyword id="KW-1003">Cell membrane</keyword>
<keyword id="KW-0175">Coiled coil</keyword>
<keyword id="KW-0472">Membrane</keyword>
<keyword id="KW-0493">Microtubule</keyword>
<keyword id="KW-0505">Motor protein</keyword>
<keyword id="KW-0547">Nucleotide-binding</keyword>
<keyword id="KW-1185">Reference proteome</keyword>
<organism>
    <name type="scientific">Arabidopsis thaliana</name>
    <name type="common">Mouse-ear cress</name>
    <dbReference type="NCBI Taxonomy" id="3702"/>
    <lineage>
        <taxon>Eukaryota</taxon>
        <taxon>Viridiplantae</taxon>
        <taxon>Streptophyta</taxon>
        <taxon>Embryophyta</taxon>
        <taxon>Tracheophyta</taxon>
        <taxon>Spermatophyta</taxon>
        <taxon>Magnoliopsida</taxon>
        <taxon>eudicotyledons</taxon>
        <taxon>Gunneridae</taxon>
        <taxon>Pentapetalae</taxon>
        <taxon>rosids</taxon>
        <taxon>malvids</taxon>
        <taxon>Brassicales</taxon>
        <taxon>Brassicaceae</taxon>
        <taxon>Camelineae</taxon>
        <taxon>Arabidopsis</taxon>
    </lineage>
</organism>
<feature type="chain" id="PRO_0000428640" description="Kinesin-like protein KIN-14B">
    <location>
        <begin position="1"/>
        <end position="1264"/>
    </location>
</feature>
<feature type="domain" description="Kinesin motor" evidence="3">
    <location>
        <begin position="138"/>
        <end position="452"/>
    </location>
</feature>
<feature type="region of interest" description="Disordered" evidence="4">
    <location>
        <begin position="1"/>
        <end position="52"/>
    </location>
</feature>
<feature type="region of interest" description="Disordered" evidence="4">
    <location>
        <begin position="588"/>
        <end position="615"/>
    </location>
</feature>
<feature type="region of interest" description="Disordered" evidence="4">
    <location>
        <begin position="652"/>
        <end position="684"/>
    </location>
</feature>
<feature type="region of interest" description="Disordered" evidence="4">
    <location>
        <begin position="1117"/>
        <end position="1136"/>
    </location>
</feature>
<feature type="coiled-coil region" evidence="2">
    <location>
        <begin position="53"/>
        <end position="84"/>
    </location>
</feature>
<feature type="coiled-coil region" evidence="2">
    <location>
        <begin position="462"/>
        <end position="511"/>
    </location>
</feature>
<feature type="coiled-coil region" evidence="2">
    <location>
        <begin position="545"/>
        <end position="592"/>
    </location>
</feature>
<feature type="coiled-coil region" evidence="2">
    <location>
        <begin position="617"/>
        <end position="640"/>
    </location>
</feature>
<feature type="compositionally biased region" description="Polar residues" evidence="4">
    <location>
        <begin position="1"/>
        <end position="10"/>
    </location>
</feature>
<feature type="compositionally biased region" description="Basic and acidic residues" evidence="4">
    <location>
        <begin position="18"/>
        <end position="30"/>
    </location>
</feature>
<feature type="compositionally biased region" description="Basic and acidic residues" evidence="4">
    <location>
        <begin position="589"/>
        <end position="600"/>
    </location>
</feature>
<feature type="compositionally biased region" description="Low complexity" evidence="4">
    <location>
        <begin position="652"/>
        <end position="668"/>
    </location>
</feature>
<feature type="binding site" evidence="3">
    <location>
        <begin position="219"/>
        <end position="226"/>
    </location>
    <ligand>
        <name>ATP</name>
        <dbReference type="ChEBI" id="CHEBI:30616"/>
    </ligand>
</feature>
<accession>Q9FKP4</accession>
<gene>
    <name evidence="12" type="primary">KIN14B</name>
    <name evidence="11" type="synonym">KAC2</name>
    <name evidence="9" type="synonym">KCA2</name>
    <name evidence="13" type="ordered locus">At5g65460</name>
    <name evidence="14" type="ORF">MNA5.20</name>
</gene>
<comment type="function">
    <text evidence="1 6 8">Kinesin-like protein required for chloroplast movements and anchor to the plasma membrane. Mediates chloroplast movement via chloroplast actin (cp-actin) filaments. Required for the chloroplast avoidance response under high intensity blue light. Mediates redundantly with CHUP1 the nuclear avoidance response under high intensity blue light (PubMed:27310016). May be involved in division plane determination (Probable).</text>
</comment>
<comment type="subunit">
    <text evidence="5 7">Homodimer and heterodimer with KCA1 (PubMed:15247388). Interacts with CDKA-1 (PubMed:15247388). Interacts with At4g14310 (PubMed:20706207).</text>
</comment>
<comment type="subcellular location">
    <subcellularLocation>
        <location evidence="6">Cell membrane</location>
    </subcellularLocation>
</comment>
<comment type="tissue specificity">
    <text evidence="5">Expressed in roots, leaves, stems and flowers.</text>
</comment>
<comment type="disruption phenotype">
    <text evidence="6 8">Impaired chloroplast accumulation and slow avoidance movement under strong blue light (PubMed:20418504). Double mutant kac1kac2 exhibits an increase in leaf transmittance and a partial defect in nuclear avoidance response under strong blue light exposure (PubMed:27310016).</text>
</comment>
<comment type="similarity">
    <text evidence="10">Belongs to the TRAFAC class myosin-kinesin ATPase superfamily. Kinesin family. KIN-14 subfamily.</text>
</comment>
<dbReference type="EMBL" id="AB011479">
    <property type="protein sequence ID" value="BAB11568.1"/>
    <property type="molecule type" value="Genomic_DNA"/>
</dbReference>
<dbReference type="EMBL" id="CP002688">
    <property type="protein sequence ID" value="AED98059.1"/>
    <property type="molecule type" value="Genomic_DNA"/>
</dbReference>
<dbReference type="RefSeq" id="NP_201349.3">
    <property type="nucleotide sequence ID" value="NM_125944.3"/>
</dbReference>
<dbReference type="SMR" id="Q9FKP4"/>
<dbReference type="BioGRID" id="21913">
    <property type="interactions" value="2"/>
</dbReference>
<dbReference type="FunCoup" id="Q9FKP4">
    <property type="interactions" value="2203"/>
</dbReference>
<dbReference type="IntAct" id="Q9FKP4">
    <property type="interactions" value="2"/>
</dbReference>
<dbReference type="STRING" id="3702.Q9FKP4"/>
<dbReference type="iPTMnet" id="Q9FKP4"/>
<dbReference type="PaxDb" id="3702-AT5G65460.1"/>
<dbReference type="ProMEX" id="Q9FKP4"/>
<dbReference type="ProteomicsDB" id="237061"/>
<dbReference type="EnsemblPlants" id="AT5G65460.1">
    <property type="protein sequence ID" value="AT5G65460.1"/>
    <property type="gene ID" value="AT5G65460"/>
</dbReference>
<dbReference type="GeneID" id="836671"/>
<dbReference type="Gramene" id="AT5G65460.1">
    <property type="protein sequence ID" value="AT5G65460.1"/>
    <property type="gene ID" value="AT5G65460"/>
</dbReference>
<dbReference type="KEGG" id="ath:AT5G65460"/>
<dbReference type="Araport" id="AT5G65460"/>
<dbReference type="TAIR" id="AT5G65460">
    <property type="gene designation" value="KAC2"/>
</dbReference>
<dbReference type="eggNOG" id="KOG0239">
    <property type="taxonomic scope" value="Eukaryota"/>
</dbReference>
<dbReference type="HOGENOM" id="CLU_008815_0_0_1"/>
<dbReference type="InParanoid" id="Q9FKP4"/>
<dbReference type="PhylomeDB" id="Q9FKP4"/>
<dbReference type="PRO" id="PR:Q9FKP4"/>
<dbReference type="Proteomes" id="UP000006548">
    <property type="component" value="Chromosome 5"/>
</dbReference>
<dbReference type="ExpressionAtlas" id="Q9FKP4">
    <property type="expression patterns" value="baseline and differential"/>
</dbReference>
<dbReference type="GO" id="GO:0005829">
    <property type="term" value="C:cytosol"/>
    <property type="evidence" value="ECO:0000314"/>
    <property type="project" value="TAIR"/>
</dbReference>
<dbReference type="GO" id="GO:0005874">
    <property type="term" value="C:microtubule"/>
    <property type="evidence" value="ECO:0007669"/>
    <property type="project" value="UniProtKB-KW"/>
</dbReference>
<dbReference type="GO" id="GO:0005886">
    <property type="term" value="C:plasma membrane"/>
    <property type="evidence" value="ECO:0000314"/>
    <property type="project" value="UniProtKB"/>
</dbReference>
<dbReference type="GO" id="GO:0005524">
    <property type="term" value="F:ATP binding"/>
    <property type="evidence" value="ECO:0007669"/>
    <property type="project" value="UniProtKB-KW"/>
</dbReference>
<dbReference type="GO" id="GO:0008017">
    <property type="term" value="F:microtubule binding"/>
    <property type="evidence" value="ECO:0000314"/>
    <property type="project" value="TAIR"/>
</dbReference>
<dbReference type="GO" id="GO:0003777">
    <property type="term" value="F:microtubule motor activity"/>
    <property type="evidence" value="ECO:0007669"/>
    <property type="project" value="InterPro"/>
</dbReference>
<dbReference type="GO" id="GO:0009904">
    <property type="term" value="P:chloroplast accumulation movement"/>
    <property type="evidence" value="ECO:0000316"/>
    <property type="project" value="UniProtKB"/>
</dbReference>
<dbReference type="GO" id="GO:0009903">
    <property type="term" value="P:chloroplast avoidance movement"/>
    <property type="evidence" value="ECO:0000316"/>
    <property type="project" value="UniProtKB"/>
</dbReference>
<dbReference type="GO" id="GO:0007018">
    <property type="term" value="P:microtubule-based movement"/>
    <property type="evidence" value="ECO:0007669"/>
    <property type="project" value="InterPro"/>
</dbReference>
<dbReference type="GO" id="GO:0031022">
    <property type="term" value="P:nuclear migration along microfilament"/>
    <property type="evidence" value="ECO:0000316"/>
    <property type="project" value="UniProtKB"/>
</dbReference>
<dbReference type="FunFam" id="3.40.850.10:FF:000058">
    <property type="entry name" value="kinesin-like protein KIN-14B isoform X1"/>
    <property type="match status" value="1"/>
</dbReference>
<dbReference type="Gene3D" id="3.40.850.10">
    <property type="entry name" value="Kinesin motor domain"/>
    <property type="match status" value="1"/>
</dbReference>
<dbReference type="InterPro" id="IPR027640">
    <property type="entry name" value="Kinesin-like_fam"/>
</dbReference>
<dbReference type="InterPro" id="IPR019821">
    <property type="entry name" value="Kinesin_motor_CS"/>
</dbReference>
<dbReference type="InterPro" id="IPR001752">
    <property type="entry name" value="Kinesin_motor_dom"/>
</dbReference>
<dbReference type="InterPro" id="IPR036961">
    <property type="entry name" value="Kinesin_motor_dom_sf"/>
</dbReference>
<dbReference type="InterPro" id="IPR027417">
    <property type="entry name" value="P-loop_NTPase"/>
</dbReference>
<dbReference type="PANTHER" id="PTHR47972:SF22">
    <property type="entry name" value="KINESIN-LIKE PROTEIN KIN-14A-RELATED"/>
    <property type="match status" value="1"/>
</dbReference>
<dbReference type="PANTHER" id="PTHR47972">
    <property type="entry name" value="KINESIN-LIKE PROTEIN KLP-3"/>
    <property type="match status" value="1"/>
</dbReference>
<dbReference type="Pfam" id="PF00225">
    <property type="entry name" value="Kinesin"/>
    <property type="match status" value="1"/>
</dbReference>
<dbReference type="PRINTS" id="PR00380">
    <property type="entry name" value="KINESINHEAVY"/>
</dbReference>
<dbReference type="SMART" id="SM00129">
    <property type="entry name" value="KISc"/>
    <property type="match status" value="1"/>
</dbReference>
<dbReference type="SUPFAM" id="SSF52540">
    <property type="entry name" value="P-loop containing nucleoside triphosphate hydrolases"/>
    <property type="match status" value="1"/>
</dbReference>
<dbReference type="PROSITE" id="PS00411">
    <property type="entry name" value="KINESIN_MOTOR_1"/>
    <property type="match status" value="1"/>
</dbReference>
<dbReference type="PROSITE" id="PS50067">
    <property type="entry name" value="KINESIN_MOTOR_2"/>
    <property type="match status" value="1"/>
</dbReference>
<sequence length="1264" mass="140396">MAEQKSTNMWNWEVTGFESKKSPSSEEGVHRTPSSMLRRYSIPKNSLPPHSSELASKVQSLKDKVQLAKDDYVGLRQEATDLQEYSNAKLERVTRYLGVLADKSRKLDQYALETEARISPLINEKKRLFNDLLTTKGNVKVFCRARPLFEDEGPSIIEFPDNCTIRVNTSDDTLSNPKKEFEFDRVYGPQVGQASLFSDVQPFVQSALDGSNVSIFAYGQTHAGKTYTMEGSNQDRGLYARCFEELMDLANSDSTSASQFSFSVSVFELYNEQVRDLLSGCQSNLPKINMGLRESVIELSQEKVDNPSEFMRVLNSAFQNRGNDKSKSTVTHLIVSIHICYSNTITRENVISKLSLVDLAGSEGLTVEDDNGDHVTDLLHVTNSISALGDVLSSLTSKRDTIPYENSFLTRILADSLGGSSKTLMIVNICPSARNLSEIMSCLNYAARARNTVPSLGNRDTIKKWRDVANDARKEVLEKERENQRLKQEVTGLKQALKEANDQCVLLYNEVQRAWRVSFTLQSDLKSENAMVVDKHKIEKEQNFQLRNQIAQLLQLEQEQKLQAQQQDSTIQNLQSKVKDLESQLSKALKSDMTRSRDPLEPQPRAAENTLDSSAVTKKLEEELKKRDALIERLHEENEKLFDRLTEKSVASSTQVSSPSSKASPTVQPADVDSAGTLPSSVDKNEGTITLVKSSSELVKTTPAGEYLTAALNDFDPEQYEGLAAIADGANKLLMLVLAAVIKAGASREHEILAEIRDSVFSFIRKMEPRRVMDTMLVSRVRILYIRSLLARSPELQSIKVSPVERFLEKPYTGRTRSSSGSSSPGRSPVRYYDEQIYGFKVNLKPEKKSKLVSVVSRIRGHDQDTGRQQVTGGKLREIQDEAKSFAIGNKPLAALFVHTPAGELQRQIRSWLAESFEFLSVTADDVSGVTTGQLELLSTAIMDGWMAGVGAAVPPHTDALGQLLSEYAKRVYTSQMQHLKDIAGTLASEEAEDAGQVAKLRSALESVDHKRRKILQQMRSDAALFTLEEGSSPVQNPSTAAEDSRLASLISLDAILKQVKEITRQASVHVLSKSKKKALLESLDELNERMPSLLDVDHPCAQREIDTAHQLVETIPEQEDNLQDEKRPSIDSISSTETDVSQWNVLQFNTGGSSAPFIIKCGANSNSELVIKADARIQEPKGGEIVRVVPRPSVLENMSLEEMKQVFGQLPEALSSLALARTADGTRARYSRLYRTLAMKVPSLRDLVGELEKGGVLKDTKST</sequence>
<name>KN14B_ARATH</name>
<evidence type="ECO:0000250" key="1">
    <source>
        <dbReference type="UniProtKB" id="Q9LX99"/>
    </source>
</evidence>
<evidence type="ECO:0000255" key="2"/>
<evidence type="ECO:0000255" key="3">
    <source>
        <dbReference type="PROSITE-ProRule" id="PRU00283"/>
    </source>
</evidence>
<evidence type="ECO:0000256" key="4">
    <source>
        <dbReference type="SAM" id="MobiDB-lite"/>
    </source>
</evidence>
<evidence type="ECO:0000269" key="5">
    <source>
    </source>
</evidence>
<evidence type="ECO:0000269" key="6">
    <source>
    </source>
</evidence>
<evidence type="ECO:0000269" key="7">
    <source>
    </source>
</evidence>
<evidence type="ECO:0000269" key="8">
    <source>
    </source>
</evidence>
<evidence type="ECO:0000303" key="9">
    <source>
    </source>
</evidence>
<evidence type="ECO:0000303" key="10">
    <source>
    </source>
</evidence>
<evidence type="ECO:0000303" key="11">
    <source>
    </source>
</evidence>
<evidence type="ECO:0000305" key="12"/>
<evidence type="ECO:0000312" key="13">
    <source>
        <dbReference type="Araport" id="AT5G65460"/>
    </source>
</evidence>
<evidence type="ECO:0000312" key="14">
    <source>
        <dbReference type="EMBL" id="BAB11568.1"/>
    </source>
</evidence>
<protein>
    <recommendedName>
        <fullName evidence="12">Kinesin-like protein KIN-14B</fullName>
    </recommendedName>
    <alternativeName>
        <fullName evidence="9">Kinesin CDKA-1-associated protein 2</fullName>
    </alternativeName>
    <alternativeName>
        <fullName evidence="9">Kinesin-like protein KCA2</fullName>
    </alternativeName>
    <alternativeName>
        <fullName evidence="11">Kinesin-like protein for actin-based chloroplast movement 2</fullName>
    </alternativeName>
</protein>
<proteinExistence type="evidence at protein level"/>